<evidence type="ECO:0000255" key="1">
    <source>
        <dbReference type="HAMAP-Rule" id="MF_00529"/>
    </source>
</evidence>
<dbReference type="EMBL" id="CP000250">
    <property type="protein sequence ID" value="ABD05693.1"/>
    <property type="molecule type" value="Genomic_DNA"/>
</dbReference>
<dbReference type="RefSeq" id="WP_011439882.1">
    <property type="nucleotide sequence ID" value="NC_007778.1"/>
</dbReference>
<dbReference type="SMR" id="Q2J1G7"/>
<dbReference type="STRING" id="316058.RPB_0983"/>
<dbReference type="KEGG" id="rpb:RPB_0983"/>
<dbReference type="eggNOG" id="ENOG50330W8">
    <property type="taxonomic scope" value="Bacteria"/>
</dbReference>
<dbReference type="HOGENOM" id="CLU_145318_0_0_5"/>
<dbReference type="OrthoDB" id="9811868at2"/>
<dbReference type="Proteomes" id="UP000008809">
    <property type="component" value="Chromosome"/>
</dbReference>
<dbReference type="GO" id="GO:0009399">
    <property type="term" value="P:nitrogen fixation"/>
    <property type="evidence" value="ECO:0007669"/>
    <property type="project" value="UniProtKB-UniRule"/>
</dbReference>
<dbReference type="HAMAP" id="MF_00529">
    <property type="entry name" value="NifW"/>
    <property type="match status" value="1"/>
</dbReference>
<dbReference type="InterPro" id="IPR004893">
    <property type="entry name" value="NifW"/>
</dbReference>
<dbReference type="NCBIfam" id="NF002009">
    <property type="entry name" value="PRK00810.1"/>
    <property type="match status" value="1"/>
</dbReference>
<dbReference type="Pfam" id="PF03206">
    <property type="entry name" value="NifW"/>
    <property type="match status" value="1"/>
</dbReference>
<dbReference type="PIRSF" id="PIRSF005790">
    <property type="entry name" value="NifW"/>
    <property type="match status" value="1"/>
</dbReference>
<name>NIFW_RHOP2</name>
<sequence length="123" mass="13158">MSATQASSQQADSKAPADIIGQLQRAASAEEFFQLLDVAYDPNVVNVARLHILKRMGQYLAGEDLAGLPAAEATARCKAVLERAYADFVASTPLDQRVFKVLKDAVAPKSPRAPAFVSLDALK</sequence>
<proteinExistence type="inferred from homology"/>
<gene>
    <name evidence="1" type="primary">nifW</name>
    <name type="ordered locus">RPB_0983</name>
</gene>
<comment type="function">
    <text evidence="1">May protect the nitrogenase Fe-Mo protein from oxidative damage.</text>
</comment>
<comment type="subunit">
    <text evidence="1">Homotrimer; associates with NifD.</text>
</comment>
<comment type="similarity">
    <text evidence="1">Belongs to the NifW family.</text>
</comment>
<organism>
    <name type="scientific">Rhodopseudomonas palustris (strain HaA2)</name>
    <dbReference type="NCBI Taxonomy" id="316058"/>
    <lineage>
        <taxon>Bacteria</taxon>
        <taxon>Pseudomonadati</taxon>
        <taxon>Pseudomonadota</taxon>
        <taxon>Alphaproteobacteria</taxon>
        <taxon>Hyphomicrobiales</taxon>
        <taxon>Nitrobacteraceae</taxon>
        <taxon>Rhodopseudomonas</taxon>
    </lineage>
</organism>
<protein>
    <recommendedName>
        <fullName evidence="1">Nitrogenase-stabilizing/protective protein NifW</fullName>
    </recommendedName>
</protein>
<keyword id="KW-0535">Nitrogen fixation</keyword>
<keyword id="KW-1185">Reference proteome</keyword>
<feature type="chain" id="PRO_0000265756" description="Nitrogenase-stabilizing/protective protein NifW">
    <location>
        <begin position="1"/>
        <end position="123"/>
    </location>
</feature>
<reference key="1">
    <citation type="submission" date="2006-01" db="EMBL/GenBank/DDBJ databases">
        <title>Complete sequence of Rhodopseudomonas palustris HaA2.</title>
        <authorList>
            <consortium name="US DOE Joint Genome Institute"/>
            <person name="Copeland A."/>
            <person name="Lucas S."/>
            <person name="Lapidus A."/>
            <person name="Barry K."/>
            <person name="Detter J.C."/>
            <person name="Glavina T."/>
            <person name="Hammon N."/>
            <person name="Israni S."/>
            <person name="Pitluck S."/>
            <person name="Chain P."/>
            <person name="Malfatti S."/>
            <person name="Shin M."/>
            <person name="Vergez L."/>
            <person name="Schmutz J."/>
            <person name="Larimer F."/>
            <person name="Land M."/>
            <person name="Hauser L."/>
            <person name="Pelletier D.A."/>
            <person name="Kyrpides N."/>
            <person name="Anderson I."/>
            <person name="Oda Y."/>
            <person name="Harwood C.S."/>
            <person name="Richardson P."/>
        </authorList>
    </citation>
    <scope>NUCLEOTIDE SEQUENCE [LARGE SCALE GENOMIC DNA]</scope>
    <source>
        <strain>HaA2</strain>
    </source>
</reference>
<accession>Q2J1G7</accession>